<protein>
    <recommendedName>
        <fullName evidence="2">Large ribosomal subunit protein uL22c</fullName>
    </recommendedName>
    <alternativeName>
        <fullName>50S ribosomal protein L22, chloroplastic</fullName>
    </alternativeName>
</protein>
<organism>
    <name type="scientific">Nuphar advena</name>
    <name type="common">Common spatterdock</name>
    <name type="synonym">Nuphar lutea subsp. advena</name>
    <dbReference type="NCBI Taxonomy" id="77108"/>
    <lineage>
        <taxon>Eukaryota</taxon>
        <taxon>Viridiplantae</taxon>
        <taxon>Streptophyta</taxon>
        <taxon>Embryophyta</taxon>
        <taxon>Tracheophyta</taxon>
        <taxon>Spermatophyta</taxon>
        <taxon>Magnoliopsida</taxon>
        <taxon>Nymphaeales</taxon>
        <taxon>Nymphaeaceae</taxon>
        <taxon>Nuphar</taxon>
    </lineage>
</organism>
<name>RK22_NUPAD</name>
<reference key="1">
    <citation type="journal article" date="2007" name="BMC Genomics">
        <title>Comparative chloroplast genomics: analyses including new sequences from the angiosperms Nuphar advena and Ranunculus macranthus.</title>
        <authorList>
            <person name="Raubeson L.A."/>
            <person name="Peery R."/>
            <person name="Chumley T.W."/>
            <person name="Dziubek C."/>
            <person name="Fourcade H.M."/>
            <person name="Boore J.L."/>
            <person name="Jansen R.K."/>
        </authorList>
    </citation>
    <scope>NUCLEOTIDE SEQUENCE [LARGE SCALE GENOMIC DNA]</scope>
</reference>
<keyword id="KW-0150">Chloroplast</keyword>
<keyword id="KW-0934">Plastid</keyword>
<keyword id="KW-0687">Ribonucleoprotein</keyword>
<keyword id="KW-0689">Ribosomal protein</keyword>
<keyword id="KW-0694">RNA-binding</keyword>
<keyword id="KW-0699">rRNA-binding</keyword>
<feature type="chain" id="PRO_0000354585" description="Large ribosomal subunit protein uL22c">
    <location>
        <begin position="1"/>
        <end position="125"/>
    </location>
</feature>
<proteinExistence type="inferred from homology"/>
<geneLocation type="chloroplast"/>
<gene>
    <name type="primary">rpl22</name>
</gene>
<evidence type="ECO:0000250" key="1"/>
<evidence type="ECO:0000305" key="2"/>
<accession>A1XFZ5</accession>
<sequence length="125" mass="14214">MIKKTQGTEIRALARHIGMSAQKARRVIDQIRGCSYEQTLMILELMPYRACYPIFKLVYSAAANASHNRGLKEADLFISKAEVNEGVIVKRLKPQARGRSYPIKRPTCHITIVLSERPNFTLKNI</sequence>
<comment type="function">
    <text evidence="1">This protein binds specifically to 23S rRNA.</text>
</comment>
<comment type="function">
    <text evidence="1">The globular domain of the protein is located near the polypeptide exit tunnel on the outside of the subunit, while an extended beta-hairpin is found that lines the wall of the exit tunnel in the center of the 70S ribosome.</text>
</comment>
<comment type="subunit">
    <text evidence="1">Part of the 50S ribosomal subunit.</text>
</comment>
<comment type="subcellular location">
    <subcellularLocation>
        <location>Plastid</location>
        <location>Chloroplast</location>
    </subcellularLocation>
</comment>
<comment type="similarity">
    <text evidence="2">Belongs to the universal ribosomal protein uL22 family.</text>
</comment>
<dbReference type="EMBL" id="DQ354691">
    <property type="protein sequence ID" value="ABC60498.1"/>
    <property type="molecule type" value="Genomic_DNA"/>
</dbReference>
<dbReference type="RefSeq" id="YP_001001574.1">
    <property type="nucleotide sequence ID" value="NC_008788.1"/>
</dbReference>
<dbReference type="SMR" id="A1XFZ5"/>
<dbReference type="GeneID" id="4699662"/>
<dbReference type="GO" id="GO:0009507">
    <property type="term" value="C:chloroplast"/>
    <property type="evidence" value="ECO:0007669"/>
    <property type="project" value="UniProtKB-SubCell"/>
</dbReference>
<dbReference type="GO" id="GO:0015934">
    <property type="term" value="C:large ribosomal subunit"/>
    <property type="evidence" value="ECO:0007669"/>
    <property type="project" value="InterPro"/>
</dbReference>
<dbReference type="GO" id="GO:0019843">
    <property type="term" value="F:rRNA binding"/>
    <property type="evidence" value="ECO:0007669"/>
    <property type="project" value="UniProtKB-UniRule"/>
</dbReference>
<dbReference type="GO" id="GO:0003735">
    <property type="term" value="F:structural constituent of ribosome"/>
    <property type="evidence" value="ECO:0007669"/>
    <property type="project" value="InterPro"/>
</dbReference>
<dbReference type="GO" id="GO:0006412">
    <property type="term" value="P:translation"/>
    <property type="evidence" value="ECO:0007669"/>
    <property type="project" value="UniProtKB-UniRule"/>
</dbReference>
<dbReference type="CDD" id="cd00336">
    <property type="entry name" value="Ribosomal_L22"/>
    <property type="match status" value="1"/>
</dbReference>
<dbReference type="FunFam" id="3.90.470.10:FF:000006">
    <property type="entry name" value="50S ribosomal protein L22, chloroplastic"/>
    <property type="match status" value="1"/>
</dbReference>
<dbReference type="Gene3D" id="3.90.470.10">
    <property type="entry name" value="Ribosomal protein L22/L17"/>
    <property type="match status" value="1"/>
</dbReference>
<dbReference type="HAMAP" id="MF_01331_B">
    <property type="entry name" value="Ribosomal_uL22_B"/>
    <property type="match status" value="1"/>
</dbReference>
<dbReference type="InterPro" id="IPR001063">
    <property type="entry name" value="Ribosomal_uL22"/>
</dbReference>
<dbReference type="InterPro" id="IPR005727">
    <property type="entry name" value="Ribosomal_uL22_bac/chlpt-type"/>
</dbReference>
<dbReference type="InterPro" id="IPR047867">
    <property type="entry name" value="Ribosomal_uL22_bac/org-type"/>
</dbReference>
<dbReference type="InterPro" id="IPR036394">
    <property type="entry name" value="Ribosomal_uL22_sf"/>
</dbReference>
<dbReference type="NCBIfam" id="TIGR01044">
    <property type="entry name" value="rplV_bact"/>
    <property type="match status" value="1"/>
</dbReference>
<dbReference type="PANTHER" id="PTHR13501">
    <property type="entry name" value="CHLOROPLAST 50S RIBOSOMAL PROTEIN L22-RELATED"/>
    <property type="match status" value="1"/>
</dbReference>
<dbReference type="PANTHER" id="PTHR13501:SF10">
    <property type="entry name" value="LARGE RIBOSOMAL SUBUNIT PROTEIN UL22M"/>
    <property type="match status" value="1"/>
</dbReference>
<dbReference type="Pfam" id="PF00237">
    <property type="entry name" value="Ribosomal_L22"/>
    <property type="match status" value="1"/>
</dbReference>
<dbReference type="SUPFAM" id="SSF54843">
    <property type="entry name" value="Ribosomal protein L22"/>
    <property type="match status" value="1"/>
</dbReference>